<keyword id="KW-0456">Lyase</keyword>
<keyword id="KW-0663">Pyridoxal phosphate</keyword>
<keyword id="KW-0704">Schiff base</keyword>
<proteinExistence type="evidence at transcript level"/>
<comment type="function">
    <text evidence="2">Catalyzes the formation of pyridoxal 5'-phosphate from ribose 5-phosphate (RBP), glyceraldehyde 3-phosphate (G3P) and ammonia. The ammonia is provided by PDX2. Can also use ribulose 5-phosphate and dihydroxyacetone phosphate as substrates, resulting from enzyme-catalyzed isomerization of RBP and G3P, respectively. Also plays an indirect role in resistance to singlet oxygen-generating photosensitizers.</text>
</comment>
<comment type="catalytic activity">
    <reaction evidence="3">
        <text>aldehydo-D-ribose 5-phosphate + D-glyceraldehyde 3-phosphate + L-glutamine = pyridoxal 5'-phosphate + L-glutamate + phosphate + 3 H2O + H(+)</text>
        <dbReference type="Rhea" id="RHEA:31507"/>
        <dbReference type="ChEBI" id="CHEBI:15377"/>
        <dbReference type="ChEBI" id="CHEBI:15378"/>
        <dbReference type="ChEBI" id="CHEBI:29985"/>
        <dbReference type="ChEBI" id="CHEBI:43474"/>
        <dbReference type="ChEBI" id="CHEBI:58273"/>
        <dbReference type="ChEBI" id="CHEBI:58359"/>
        <dbReference type="ChEBI" id="CHEBI:59776"/>
        <dbReference type="ChEBI" id="CHEBI:597326"/>
        <dbReference type="EC" id="4.3.3.6"/>
    </reaction>
</comment>
<comment type="pathway">
    <text>Cofactor biosynthesis; pyridoxal 5'-phosphate biosynthesis.</text>
</comment>
<comment type="induction">
    <text evidence="4">By wounding, gibberelic acid and 1-aminocyclopropane-1-carboxylic acid (ACC), but not after treatment with methyl jasmonate or active oxygen species.</text>
</comment>
<comment type="miscellaneous">
    <text>Vitamin B6 is an essential quencher of singlet oxygen in plants, that can protect cellular membranes from lipid peroxidation.</text>
</comment>
<comment type="similarity">
    <text evidence="5">Belongs to the PdxS/SNZ family.</text>
</comment>
<dbReference type="EC" id="4.3.3.6"/>
<dbReference type="EMBL" id="AY007525">
    <property type="protein sequence ID" value="AAG17942.1"/>
    <property type="molecule type" value="mRNA"/>
</dbReference>
<dbReference type="RefSeq" id="XP_007147987.1">
    <property type="nucleotide sequence ID" value="XM_007147925.1"/>
</dbReference>
<dbReference type="SMR" id="Q9FT25"/>
<dbReference type="EnsemblPlants" id="ESW19981">
    <property type="protein sequence ID" value="ESW19981"/>
    <property type="gene ID" value="PHAVU_006G171100g"/>
</dbReference>
<dbReference type="Gramene" id="ESW19981">
    <property type="protein sequence ID" value="ESW19981"/>
    <property type="gene ID" value="PHAVU_006G171100g"/>
</dbReference>
<dbReference type="eggNOG" id="KOG1606">
    <property type="taxonomic scope" value="Eukaryota"/>
</dbReference>
<dbReference type="OMA" id="RYANRGW"/>
<dbReference type="OrthoDB" id="1660966at2759"/>
<dbReference type="PhylomeDB" id="Q9FT25"/>
<dbReference type="UniPathway" id="UPA00245"/>
<dbReference type="GO" id="GO:0036381">
    <property type="term" value="F:pyridoxal 5'-phosphate synthase (glutamine hydrolysing) activity"/>
    <property type="evidence" value="ECO:0007669"/>
    <property type="project" value="UniProtKB-EC"/>
</dbReference>
<dbReference type="GO" id="GO:0006520">
    <property type="term" value="P:amino acid metabolic process"/>
    <property type="evidence" value="ECO:0007669"/>
    <property type="project" value="TreeGrafter"/>
</dbReference>
<dbReference type="GO" id="GO:0042823">
    <property type="term" value="P:pyridoxal phosphate biosynthetic process"/>
    <property type="evidence" value="ECO:0007669"/>
    <property type="project" value="UniProtKB-UniPathway"/>
</dbReference>
<dbReference type="GO" id="GO:0008615">
    <property type="term" value="P:pyridoxine biosynthetic process"/>
    <property type="evidence" value="ECO:0007669"/>
    <property type="project" value="TreeGrafter"/>
</dbReference>
<dbReference type="CDD" id="cd04727">
    <property type="entry name" value="pdxS"/>
    <property type="match status" value="1"/>
</dbReference>
<dbReference type="FunFam" id="3.20.20.70:FF:000001">
    <property type="entry name" value="Pyridoxine biosynthesis protein PDX1"/>
    <property type="match status" value="1"/>
</dbReference>
<dbReference type="Gene3D" id="3.20.20.70">
    <property type="entry name" value="Aldolase class I"/>
    <property type="match status" value="1"/>
</dbReference>
<dbReference type="HAMAP" id="MF_01824">
    <property type="entry name" value="PdxS"/>
    <property type="match status" value="1"/>
</dbReference>
<dbReference type="InterPro" id="IPR013785">
    <property type="entry name" value="Aldolase_TIM"/>
</dbReference>
<dbReference type="InterPro" id="IPR001852">
    <property type="entry name" value="PdxS/SNZ"/>
</dbReference>
<dbReference type="InterPro" id="IPR033755">
    <property type="entry name" value="PdxS/SNZ_N"/>
</dbReference>
<dbReference type="InterPro" id="IPR011060">
    <property type="entry name" value="RibuloseP-bd_barrel"/>
</dbReference>
<dbReference type="NCBIfam" id="NF003215">
    <property type="entry name" value="PRK04180.1"/>
    <property type="match status" value="1"/>
</dbReference>
<dbReference type="NCBIfam" id="TIGR00343">
    <property type="entry name" value="pyridoxal 5'-phosphate synthase lyase subunit PdxS"/>
    <property type="match status" value="1"/>
</dbReference>
<dbReference type="PANTHER" id="PTHR31829:SF6">
    <property type="entry name" value="PDXS_SNZ N-TERMINAL DOMAIN-CONTAINING PROTEIN"/>
    <property type="match status" value="1"/>
</dbReference>
<dbReference type="PANTHER" id="PTHR31829">
    <property type="entry name" value="PYRIDOXAL 5'-PHOSPHATE SYNTHASE SUBUNIT SNZ1-RELATED"/>
    <property type="match status" value="1"/>
</dbReference>
<dbReference type="Pfam" id="PF01680">
    <property type="entry name" value="SOR_SNZ"/>
    <property type="match status" value="1"/>
</dbReference>
<dbReference type="PIRSF" id="PIRSF029271">
    <property type="entry name" value="Pdx1"/>
    <property type="match status" value="1"/>
</dbReference>
<dbReference type="SUPFAM" id="SSF51366">
    <property type="entry name" value="Ribulose-phoshate binding barrel"/>
    <property type="match status" value="1"/>
</dbReference>
<dbReference type="PROSITE" id="PS01235">
    <property type="entry name" value="PDXS_SNZ_1"/>
    <property type="match status" value="1"/>
</dbReference>
<dbReference type="PROSITE" id="PS51129">
    <property type="entry name" value="PDXS_SNZ_2"/>
    <property type="match status" value="1"/>
</dbReference>
<gene>
    <name type="primary">PDX1</name>
</gene>
<organism>
    <name type="scientific">Phaseolus vulgaris</name>
    <name type="common">Kidney bean</name>
    <name type="synonym">French bean</name>
    <dbReference type="NCBI Taxonomy" id="3885"/>
    <lineage>
        <taxon>Eukaryota</taxon>
        <taxon>Viridiplantae</taxon>
        <taxon>Streptophyta</taxon>
        <taxon>Embryophyta</taxon>
        <taxon>Tracheophyta</taxon>
        <taxon>Spermatophyta</taxon>
        <taxon>Magnoliopsida</taxon>
        <taxon>eudicotyledons</taxon>
        <taxon>Gunneridae</taxon>
        <taxon>Pentapetalae</taxon>
        <taxon>rosids</taxon>
        <taxon>fabids</taxon>
        <taxon>Fabales</taxon>
        <taxon>Fabaceae</taxon>
        <taxon>Papilionoideae</taxon>
        <taxon>50 kb inversion clade</taxon>
        <taxon>NPAAA clade</taxon>
        <taxon>indigoferoid/millettioid clade</taxon>
        <taxon>Phaseoleae</taxon>
        <taxon>Phaseolus</taxon>
    </lineage>
</organism>
<reference key="1">
    <citation type="submission" date="2000-08" db="EMBL/GenBank/DDBJ databases">
        <title>Characterization of a novel gene (pvPDX1) that is regulated by ethylene, methyl jasmonate and light.</title>
        <authorList>
            <person name="Pidgeon C.M."/>
            <person name="Reid D.M."/>
        </authorList>
    </citation>
    <scope>NUCLEOTIDE SEQUENCE [MRNA]</scope>
    <source>
        <strain>cv. Taylor's horticultural</strain>
    </source>
</reference>
<reference key="2">
    <citation type="journal article" date="2004" name="Physiol. Plantarum">
        <title>A highly conserved gene for vitamin B biosynthesis may have consequences for stress and hormone responses in plants.</title>
        <authorList>
            <person name="Graham C.M."/>
            <person name="Ehrenshaft M."/>
            <person name="Hausner G."/>
            <person name="Reid D.M."/>
        </authorList>
    </citation>
    <scope>NUCLEOTIDE SEQUENCE [MRNA]</scope>
    <scope>INDUCTION</scope>
    <source>
        <strain>cv. Taylor's horticultural</strain>
    </source>
</reference>
<protein>
    <recommendedName>
        <fullName>Pyridoxal 5'-phosphate synthase subunit PDX1</fullName>
        <shortName>PLP synthase subunit PDX1</shortName>
        <ecNumber>4.3.3.6</ecNumber>
    </recommendedName>
    <alternativeName>
        <fullName>pvPDX1</fullName>
    </alternativeName>
</protein>
<sequence length="312" mass="33405">MEGEGSRVVALYDGNGAITETKKSPFSVKVGLAQMLRGGVIMDVVNADQARIAEEAGACAVMALERVPADIRAQGGVARMSDPQLIKEIKRAVTIPVMAKARIGHFVEAQILEAIGIDYVDESEVLTLADDANHINKHNFRIPFVCGCRNLGEALRRIREGAAMIRTKGEAGTGNIIEAVRHVRSVMSDIRVLRNMDDDEVFTFAKSIAAPYDLVMQTKQLGRLPVVHFAAGGVATPADAALMMQLGCDGVFVGSGVFKSGDPAKRARAIVQAVTHYSDPEILAEVSCGLGEAMVGINLSDTNVERFANRSE</sequence>
<name>PDX1_PHAVU</name>
<evidence type="ECO:0000250" key="1">
    <source>
        <dbReference type="UniProtKB" id="O59080"/>
    </source>
</evidence>
<evidence type="ECO:0000250" key="2">
    <source>
        <dbReference type="UniProtKB" id="O80448"/>
    </source>
</evidence>
<evidence type="ECO:0000250" key="3">
    <source>
        <dbReference type="UniProtKB" id="Q03148"/>
    </source>
</evidence>
<evidence type="ECO:0000269" key="4">
    <source>
    </source>
</evidence>
<evidence type="ECO:0000305" key="5"/>
<feature type="chain" id="PRO_0000109372" description="Pyridoxal 5'-phosphate synthase subunit PDX1">
    <location>
        <begin position="1"/>
        <end position="312"/>
    </location>
</feature>
<feature type="active site" description="Schiff-base intermediate with D-ribose 5-phosphate" evidence="1">
    <location>
        <position position="100"/>
    </location>
</feature>
<feature type="binding site" evidence="1">
    <location>
        <position position="43"/>
    </location>
    <ligand>
        <name>D-ribose 5-phosphate</name>
        <dbReference type="ChEBI" id="CHEBI:78346"/>
    </ligand>
</feature>
<feature type="binding site" evidence="1">
    <location>
        <position position="172"/>
    </location>
    <ligand>
        <name>D-ribose 5-phosphate</name>
        <dbReference type="ChEBI" id="CHEBI:78346"/>
    </ligand>
</feature>
<feature type="binding site" evidence="3">
    <location>
        <position position="184"/>
    </location>
    <ligand>
        <name>D-glyceraldehyde 3-phosphate</name>
        <dbReference type="ChEBI" id="CHEBI:59776"/>
    </ligand>
</feature>
<feature type="binding site" evidence="1">
    <location>
        <position position="233"/>
    </location>
    <ligand>
        <name>D-ribose 5-phosphate</name>
        <dbReference type="ChEBI" id="CHEBI:78346"/>
    </ligand>
</feature>
<feature type="binding site" evidence="1">
    <location>
        <begin position="254"/>
        <end position="255"/>
    </location>
    <ligand>
        <name>D-ribose 5-phosphate</name>
        <dbReference type="ChEBI" id="CHEBI:78346"/>
    </ligand>
</feature>
<accession>Q9FT25</accession>